<name>SUCC_STAAM</name>
<reference key="1">
    <citation type="journal article" date="2001" name="Lancet">
        <title>Whole genome sequencing of meticillin-resistant Staphylococcus aureus.</title>
        <authorList>
            <person name="Kuroda M."/>
            <person name="Ohta T."/>
            <person name="Uchiyama I."/>
            <person name="Baba T."/>
            <person name="Yuzawa H."/>
            <person name="Kobayashi I."/>
            <person name="Cui L."/>
            <person name="Oguchi A."/>
            <person name="Aoki K."/>
            <person name="Nagai Y."/>
            <person name="Lian J.-Q."/>
            <person name="Ito T."/>
            <person name="Kanamori M."/>
            <person name="Matsumaru H."/>
            <person name="Maruyama A."/>
            <person name="Murakami H."/>
            <person name="Hosoyama A."/>
            <person name="Mizutani-Ui Y."/>
            <person name="Takahashi N.K."/>
            <person name="Sawano T."/>
            <person name="Inoue R."/>
            <person name="Kaito C."/>
            <person name="Sekimizu K."/>
            <person name="Hirakawa H."/>
            <person name="Kuhara S."/>
            <person name="Goto S."/>
            <person name="Yabuzaki J."/>
            <person name="Kanehisa M."/>
            <person name="Yamashita A."/>
            <person name="Oshima K."/>
            <person name="Furuya K."/>
            <person name="Yoshino C."/>
            <person name="Shiba T."/>
            <person name="Hattori M."/>
            <person name="Ogasawara N."/>
            <person name="Hayashi H."/>
            <person name="Hiramatsu K."/>
        </authorList>
    </citation>
    <scope>NUCLEOTIDE SEQUENCE [LARGE SCALE GENOMIC DNA]</scope>
    <source>
        <strain>Mu50 / ATCC 700699</strain>
    </source>
</reference>
<comment type="function">
    <text evidence="1">Succinyl-CoA synthetase functions in the citric acid cycle (TCA), coupling the hydrolysis of succinyl-CoA to the synthesis of either ATP or GTP and thus represents the only step of substrate-level phosphorylation in the TCA. The beta subunit provides nucleotide specificity of the enzyme and binds the substrate succinate, while the binding sites for coenzyme A and phosphate are found in the alpha subunit.</text>
</comment>
<comment type="catalytic activity">
    <reaction evidence="1">
        <text>succinate + ATP + CoA = succinyl-CoA + ADP + phosphate</text>
        <dbReference type="Rhea" id="RHEA:17661"/>
        <dbReference type="ChEBI" id="CHEBI:30031"/>
        <dbReference type="ChEBI" id="CHEBI:30616"/>
        <dbReference type="ChEBI" id="CHEBI:43474"/>
        <dbReference type="ChEBI" id="CHEBI:57287"/>
        <dbReference type="ChEBI" id="CHEBI:57292"/>
        <dbReference type="ChEBI" id="CHEBI:456216"/>
        <dbReference type="EC" id="6.2.1.5"/>
    </reaction>
    <physiologicalReaction direction="right-to-left" evidence="1">
        <dbReference type="Rhea" id="RHEA:17663"/>
    </physiologicalReaction>
</comment>
<comment type="catalytic activity">
    <reaction evidence="1">
        <text>GTP + succinate + CoA = succinyl-CoA + GDP + phosphate</text>
        <dbReference type="Rhea" id="RHEA:22120"/>
        <dbReference type="ChEBI" id="CHEBI:30031"/>
        <dbReference type="ChEBI" id="CHEBI:37565"/>
        <dbReference type="ChEBI" id="CHEBI:43474"/>
        <dbReference type="ChEBI" id="CHEBI:57287"/>
        <dbReference type="ChEBI" id="CHEBI:57292"/>
        <dbReference type="ChEBI" id="CHEBI:58189"/>
    </reaction>
    <physiologicalReaction direction="right-to-left" evidence="1">
        <dbReference type="Rhea" id="RHEA:22122"/>
    </physiologicalReaction>
</comment>
<comment type="cofactor">
    <cofactor evidence="1">
        <name>Mg(2+)</name>
        <dbReference type="ChEBI" id="CHEBI:18420"/>
    </cofactor>
    <text evidence="1">Binds 1 Mg(2+) ion per subunit.</text>
</comment>
<comment type="pathway">
    <text evidence="1">Carbohydrate metabolism; tricarboxylic acid cycle; succinate from succinyl-CoA (ligase route): step 1/1.</text>
</comment>
<comment type="subunit">
    <text evidence="1">Heterotetramer of two alpha and two beta subunits.</text>
</comment>
<comment type="similarity">
    <text evidence="1">Belongs to the succinate/malate CoA ligase beta subunit family.</text>
</comment>
<sequence>MNIHEYQGKEIFRSMGVAVPEGRVAFTAEEAVEKAKELNSDVYVVKAQIHAGGRGKAGGVKIAKSLSEVETYAKELLGKTLVTHQTGPEGKEIKRLYIEEGCAIQKEYYVGFVIDRATDQVTLMASEEGGTEIEEVAAKTPEKIFKETIDPVIGLSPFQARRIAFNINIPKESVNKAAKFLLALYNVFIEKDCSIVEINPLVTTADGDVLALDAKINFDDNALFRHKDVVELRDLEEEDPKEIEASKHDLSYIALDGDIGCMVNGAGLAMATMDTINHFGGNPANFLDAGGSATREKVTEAFKIILGDENVKGIFVNIFGGIMKCDVIAEGIVEAVKEVDLTLPLVVRLEGTNVELGKKILKDSGLAIEPAATMAEGAQKIVKLVKEA</sequence>
<feature type="chain" id="PRO_0000102860" description="Succinate--CoA ligase [ADP-forming] subunit beta">
    <location>
        <begin position="1"/>
        <end position="388"/>
    </location>
</feature>
<feature type="domain" description="ATP-grasp" evidence="1">
    <location>
        <begin position="9"/>
        <end position="244"/>
    </location>
</feature>
<feature type="binding site" evidence="1">
    <location>
        <position position="46"/>
    </location>
    <ligand>
        <name>ATP</name>
        <dbReference type="ChEBI" id="CHEBI:30616"/>
    </ligand>
</feature>
<feature type="binding site" evidence="1">
    <location>
        <begin position="53"/>
        <end position="55"/>
    </location>
    <ligand>
        <name>ATP</name>
        <dbReference type="ChEBI" id="CHEBI:30616"/>
    </ligand>
</feature>
<feature type="binding site" evidence="1">
    <location>
        <position position="99"/>
    </location>
    <ligand>
        <name>ATP</name>
        <dbReference type="ChEBI" id="CHEBI:30616"/>
    </ligand>
</feature>
<feature type="binding site" evidence="1">
    <location>
        <position position="102"/>
    </location>
    <ligand>
        <name>ATP</name>
        <dbReference type="ChEBI" id="CHEBI:30616"/>
    </ligand>
</feature>
<feature type="binding site" evidence="1">
    <location>
        <position position="107"/>
    </location>
    <ligand>
        <name>ATP</name>
        <dbReference type="ChEBI" id="CHEBI:30616"/>
    </ligand>
</feature>
<feature type="binding site" evidence="1">
    <location>
        <position position="199"/>
    </location>
    <ligand>
        <name>Mg(2+)</name>
        <dbReference type="ChEBI" id="CHEBI:18420"/>
    </ligand>
</feature>
<feature type="binding site" evidence="1">
    <location>
        <position position="213"/>
    </location>
    <ligand>
        <name>Mg(2+)</name>
        <dbReference type="ChEBI" id="CHEBI:18420"/>
    </ligand>
</feature>
<feature type="binding site" evidence="1">
    <location>
        <position position="264"/>
    </location>
    <ligand>
        <name>substrate</name>
        <note>ligand shared with subunit alpha</note>
    </ligand>
</feature>
<feature type="binding site" evidence="1">
    <location>
        <begin position="321"/>
        <end position="323"/>
    </location>
    <ligand>
        <name>substrate</name>
        <note>ligand shared with subunit alpha</note>
    </ligand>
</feature>
<dbReference type="EC" id="6.2.1.5" evidence="1"/>
<dbReference type="EMBL" id="BA000017">
    <property type="protein sequence ID" value="BAB57407.1"/>
    <property type="molecule type" value="Genomic_DNA"/>
</dbReference>
<dbReference type="RefSeq" id="WP_001020801.1">
    <property type="nucleotide sequence ID" value="NC_002758.2"/>
</dbReference>
<dbReference type="SMR" id="P66871"/>
<dbReference type="KEGG" id="sav:SAV1245"/>
<dbReference type="HOGENOM" id="CLU_037430_0_2_9"/>
<dbReference type="PhylomeDB" id="P66871"/>
<dbReference type="UniPathway" id="UPA00223">
    <property type="reaction ID" value="UER00999"/>
</dbReference>
<dbReference type="Proteomes" id="UP000002481">
    <property type="component" value="Chromosome"/>
</dbReference>
<dbReference type="GO" id="GO:0005829">
    <property type="term" value="C:cytosol"/>
    <property type="evidence" value="ECO:0007669"/>
    <property type="project" value="TreeGrafter"/>
</dbReference>
<dbReference type="GO" id="GO:0042709">
    <property type="term" value="C:succinate-CoA ligase complex"/>
    <property type="evidence" value="ECO:0007669"/>
    <property type="project" value="TreeGrafter"/>
</dbReference>
<dbReference type="GO" id="GO:0005524">
    <property type="term" value="F:ATP binding"/>
    <property type="evidence" value="ECO:0007669"/>
    <property type="project" value="UniProtKB-UniRule"/>
</dbReference>
<dbReference type="GO" id="GO:0000287">
    <property type="term" value="F:magnesium ion binding"/>
    <property type="evidence" value="ECO:0007669"/>
    <property type="project" value="UniProtKB-UniRule"/>
</dbReference>
<dbReference type="GO" id="GO:0004775">
    <property type="term" value="F:succinate-CoA ligase (ADP-forming) activity"/>
    <property type="evidence" value="ECO:0007669"/>
    <property type="project" value="UniProtKB-UniRule"/>
</dbReference>
<dbReference type="GO" id="GO:0004776">
    <property type="term" value="F:succinate-CoA ligase (GDP-forming) activity"/>
    <property type="evidence" value="ECO:0007669"/>
    <property type="project" value="RHEA"/>
</dbReference>
<dbReference type="GO" id="GO:0006104">
    <property type="term" value="P:succinyl-CoA metabolic process"/>
    <property type="evidence" value="ECO:0007669"/>
    <property type="project" value="TreeGrafter"/>
</dbReference>
<dbReference type="GO" id="GO:0006099">
    <property type="term" value="P:tricarboxylic acid cycle"/>
    <property type="evidence" value="ECO:0007669"/>
    <property type="project" value="UniProtKB-UniRule"/>
</dbReference>
<dbReference type="FunFam" id="3.30.1490.20:FF:000002">
    <property type="entry name" value="Succinate--CoA ligase [ADP-forming] subunit beta"/>
    <property type="match status" value="1"/>
</dbReference>
<dbReference type="FunFam" id="3.30.470.20:FF:000002">
    <property type="entry name" value="Succinate--CoA ligase [ADP-forming] subunit beta"/>
    <property type="match status" value="1"/>
</dbReference>
<dbReference type="FunFam" id="3.40.50.261:FF:000001">
    <property type="entry name" value="Succinate--CoA ligase [ADP-forming] subunit beta"/>
    <property type="match status" value="1"/>
</dbReference>
<dbReference type="Gene3D" id="3.30.1490.20">
    <property type="entry name" value="ATP-grasp fold, A domain"/>
    <property type="match status" value="1"/>
</dbReference>
<dbReference type="Gene3D" id="3.30.470.20">
    <property type="entry name" value="ATP-grasp fold, B domain"/>
    <property type="match status" value="1"/>
</dbReference>
<dbReference type="Gene3D" id="3.40.50.261">
    <property type="entry name" value="Succinyl-CoA synthetase domains"/>
    <property type="match status" value="1"/>
</dbReference>
<dbReference type="HAMAP" id="MF_00558">
    <property type="entry name" value="Succ_CoA_beta"/>
    <property type="match status" value="1"/>
</dbReference>
<dbReference type="InterPro" id="IPR011761">
    <property type="entry name" value="ATP-grasp"/>
</dbReference>
<dbReference type="InterPro" id="IPR013650">
    <property type="entry name" value="ATP-grasp_succ-CoA_synth-type"/>
</dbReference>
<dbReference type="InterPro" id="IPR013815">
    <property type="entry name" value="ATP_grasp_subdomain_1"/>
</dbReference>
<dbReference type="InterPro" id="IPR017866">
    <property type="entry name" value="Succ-CoA_synthase_bsu_CS"/>
</dbReference>
<dbReference type="InterPro" id="IPR005811">
    <property type="entry name" value="SUCC_ACL_C"/>
</dbReference>
<dbReference type="InterPro" id="IPR005809">
    <property type="entry name" value="Succ_CoA_ligase-like_bsu"/>
</dbReference>
<dbReference type="InterPro" id="IPR016102">
    <property type="entry name" value="Succinyl-CoA_synth-like"/>
</dbReference>
<dbReference type="NCBIfam" id="NF001913">
    <property type="entry name" value="PRK00696.1"/>
    <property type="match status" value="1"/>
</dbReference>
<dbReference type="NCBIfam" id="TIGR01016">
    <property type="entry name" value="sucCoAbeta"/>
    <property type="match status" value="1"/>
</dbReference>
<dbReference type="PANTHER" id="PTHR11815:SF10">
    <property type="entry name" value="SUCCINATE--COA LIGASE [GDP-FORMING] SUBUNIT BETA, MITOCHONDRIAL"/>
    <property type="match status" value="1"/>
</dbReference>
<dbReference type="PANTHER" id="PTHR11815">
    <property type="entry name" value="SUCCINYL-COA SYNTHETASE BETA CHAIN"/>
    <property type="match status" value="1"/>
</dbReference>
<dbReference type="Pfam" id="PF08442">
    <property type="entry name" value="ATP-grasp_2"/>
    <property type="match status" value="1"/>
</dbReference>
<dbReference type="Pfam" id="PF00549">
    <property type="entry name" value="Ligase_CoA"/>
    <property type="match status" value="1"/>
</dbReference>
<dbReference type="PIRSF" id="PIRSF001554">
    <property type="entry name" value="SucCS_beta"/>
    <property type="match status" value="1"/>
</dbReference>
<dbReference type="SUPFAM" id="SSF56059">
    <property type="entry name" value="Glutathione synthetase ATP-binding domain-like"/>
    <property type="match status" value="1"/>
</dbReference>
<dbReference type="SUPFAM" id="SSF52210">
    <property type="entry name" value="Succinyl-CoA synthetase domains"/>
    <property type="match status" value="1"/>
</dbReference>
<dbReference type="PROSITE" id="PS50975">
    <property type="entry name" value="ATP_GRASP"/>
    <property type="match status" value="1"/>
</dbReference>
<dbReference type="PROSITE" id="PS01217">
    <property type="entry name" value="SUCCINYL_COA_LIG_3"/>
    <property type="match status" value="1"/>
</dbReference>
<proteinExistence type="inferred from homology"/>
<accession>P66871</accession>
<accession>Q99UM5</accession>
<gene>
    <name evidence="1" type="primary">sucC</name>
    <name type="ordered locus">SAV1245</name>
</gene>
<evidence type="ECO:0000255" key="1">
    <source>
        <dbReference type="HAMAP-Rule" id="MF_00558"/>
    </source>
</evidence>
<protein>
    <recommendedName>
        <fullName evidence="1">Succinate--CoA ligase [ADP-forming] subunit beta</fullName>
        <ecNumber evidence="1">6.2.1.5</ecNumber>
    </recommendedName>
    <alternativeName>
        <fullName evidence="1">Succinyl-CoA synthetase subunit beta</fullName>
        <shortName evidence="1">SCS-beta</shortName>
    </alternativeName>
</protein>
<keyword id="KW-0067">ATP-binding</keyword>
<keyword id="KW-0436">Ligase</keyword>
<keyword id="KW-0460">Magnesium</keyword>
<keyword id="KW-0479">Metal-binding</keyword>
<keyword id="KW-0547">Nucleotide-binding</keyword>
<keyword id="KW-0816">Tricarboxylic acid cycle</keyword>
<organism>
    <name type="scientific">Staphylococcus aureus (strain Mu50 / ATCC 700699)</name>
    <dbReference type="NCBI Taxonomy" id="158878"/>
    <lineage>
        <taxon>Bacteria</taxon>
        <taxon>Bacillati</taxon>
        <taxon>Bacillota</taxon>
        <taxon>Bacilli</taxon>
        <taxon>Bacillales</taxon>
        <taxon>Staphylococcaceae</taxon>
        <taxon>Staphylococcus</taxon>
    </lineage>
</organism>